<feature type="chain" id="PRO_1000124932" description="GTP cyclohydrolase 1">
    <location>
        <begin position="1"/>
        <end position="184"/>
    </location>
</feature>
<feature type="binding site" evidence="1">
    <location>
        <position position="75"/>
    </location>
    <ligand>
        <name>Zn(2+)</name>
        <dbReference type="ChEBI" id="CHEBI:29105"/>
    </ligand>
</feature>
<feature type="binding site" evidence="1">
    <location>
        <position position="78"/>
    </location>
    <ligand>
        <name>Zn(2+)</name>
        <dbReference type="ChEBI" id="CHEBI:29105"/>
    </ligand>
</feature>
<feature type="binding site" evidence="1">
    <location>
        <position position="146"/>
    </location>
    <ligand>
        <name>Zn(2+)</name>
        <dbReference type="ChEBI" id="CHEBI:29105"/>
    </ligand>
</feature>
<comment type="catalytic activity">
    <reaction evidence="1">
        <text>GTP + H2O = 7,8-dihydroneopterin 3'-triphosphate + formate + H(+)</text>
        <dbReference type="Rhea" id="RHEA:17473"/>
        <dbReference type="ChEBI" id="CHEBI:15377"/>
        <dbReference type="ChEBI" id="CHEBI:15378"/>
        <dbReference type="ChEBI" id="CHEBI:15740"/>
        <dbReference type="ChEBI" id="CHEBI:37565"/>
        <dbReference type="ChEBI" id="CHEBI:58462"/>
        <dbReference type="EC" id="3.5.4.16"/>
    </reaction>
</comment>
<comment type="pathway">
    <text evidence="1">Cofactor biosynthesis; 7,8-dihydroneopterin triphosphate biosynthesis; 7,8-dihydroneopterin triphosphate from GTP: step 1/1.</text>
</comment>
<comment type="subunit">
    <text evidence="1">Homomer.</text>
</comment>
<comment type="similarity">
    <text evidence="1">Belongs to the GTP cyclohydrolase I family.</text>
</comment>
<name>GCH1_STRZT</name>
<reference key="1">
    <citation type="journal article" date="2010" name="Genome Biol.">
        <title>Structure and dynamics of the pan-genome of Streptococcus pneumoniae and closely related species.</title>
        <authorList>
            <person name="Donati C."/>
            <person name="Hiller N.L."/>
            <person name="Tettelin H."/>
            <person name="Muzzi A."/>
            <person name="Croucher N.J."/>
            <person name="Angiuoli S.V."/>
            <person name="Oggioni M."/>
            <person name="Dunning Hotopp J.C."/>
            <person name="Hu F.Z."/>
            <person name="Riley D.R."/>
            <person name="Covacci A."/>
            <person name="Mitchell T.J."/>
            <person name="Bentley S.D."/>
            <person name="Kilian M."/>
            <person name="Ehrlich G.D."/>
            <person name="Rappuoli R."/>
            <person name="Moxon E.R."/>
            <person name="Masignani V."/>
        </authorList>
    </citation>
    <scope>NUCLEOTIDE SEQUENCE [LARGE SCALE GENOMIC DNA]</scope>
    <source>
        <strain>Taiwan19F-14</strain>
    </source>
</reference>
<evidence type="ECO:0000255" key="1">
    <source>
        <dbReference type="HAMAP-Rule" id="MF_00223"/>
    </source>
</evidence>
<dbReference type="EC" id="3.5.4.16" evidence="1"/>
<dbReference type="EMBL" id="CP000921">
    <property type="protein sequence ID" value="ACO23653.1"/>
    <property type="molecule type" value="Genomic_DNA"/>
</dbReference>
<dbReference type="RefSeq" id="WP_000380925.1">
    <property type="nucleotide sequence ID" value="NC_012469.1"/>
</dbReference>
<dbReference type="SMR" id="C1CPG4"/>
<dbReference type="KEGG" id="snt:SPT_0337"/>
<dbReference type="HOGENOM" id="CLU_049768_3_3_9"/>
<dbReference type="UniPathway" id="UPA00848">
    <property type="reaction ID" value="UER00151"/>
</dbReference>
<dbReference type="GO" id="GO:0005737">
    <property type="term" value="C:cytoplasm"/>
    <property type="evidence" value="ECO:0007669"/>
    <property type="project" value="TreeGrafter"/>
</dbReference>
<dbReference type="GO" id="GO:0005525">
    <property type="term" value="F:GTP binding"/>
    <property type="evidence" value="ECO:0007669"/>
    <property type="project" value="UniProtKB-KW"/>
</dbReference>
<dbReference type="GO" id="GO:0003934">
    <property type="term" value="F:GTP cyclohydrolase I activity"/>
    <property type="evidence" value="ECO:0007669"/>
    <property type="project" value="UniProtKB-UniRule"/>
</dbReference>
<dbReference type="GO" id="GO:0008270">
    <property type="term" value="F:zinc ion binding"/>
    <property type="evidence" value="ECO:0007669"/>
    <property type="project" value="UniProtKB-UniRule"/>
</dbReference>
<dbReference type="GO" id="GO:0006730">
    <property type="term" value="P:one-carbon metabolic process"/>
    <property type="evidence" value="ECO:0007669"/>
    <property type="project" value="UniProtKB-UniRule"/>
</dbReference>
<dbReference type="GO" id="GO:0006729">
    <property type="term" value="P:tetrahydrobiopterin biosynthetic process"/>
    <property type="evidence" value="ECO:0007669"/>
    <property type="project" value="TreeGrafter"/>
</dbReference>
<dbReference type="GO" id="GO:0046654">
    <property type="term" value="P:tetrahydrofolate biosynthetic process"/>
    <property type="evidence" value="ECO:0007669"/>
    <property type="project" value="UniProtKB-UniRule"/>
</dbReference>
<dbReference type="CDD" id="cd00642">
    <property type="entry name" value="GTP_cyclohydro1"/>
    <property type="match status" value="1"/>
</dbReference>
<dbReference type="FunFam" id="1.10.286.10:FF:000001">
    <property type="entry name" value="GTP cyclohydrolase 1"/>
    <property type="match status" value="1"/>
</dbReference>
<dbReference type="FunFam" id="3.30.1130.10:FF:000001">
    <property type="entry name" value="GTP cyclohydrolase 1"/>
    <property type="match status" value="1"/>
</dbReference>
<dbReference type="Gene3D" id="1.10.286.10">
    <property type="match status" value="1"/>
</dbReference>
<dbReference type="Gene3D" id="3.30.1130.10">
    <property type="match status" value="1"/>
</dbReference>
<dbReference type="HAMAP" id="MF_00223">
    <property type="entry name" value="FolE"/>
    <property type="match status" value="1"/>
</dbReference>
<dbReference type="InterPro" id="IPR043133">
    <property type="entry name" value="GTP-CH-I_C/QueF"/>
</dbReference>
<dbReference type="InterPro" id="IPR043134">
    <property type="entry name" value="GTP-CH-I_N"/>
</dbReference>
<dbReference type="InterPro" id="IPR001474">
    <property type="entry name" value="GTP_CycHdrlase_I"/>
</dbReference>
<dbReference type="InterPro" id="IPR018234">
    <property type="entry name" value="GTP_CycHdrlase_I_CS"/>
</dbReference>
<dbReference type="InterPro" id="IPR020602">
    <property type="entry name" value="GTP_CycHdrlase_I_dom"/>
</dbReference>
<dbReference type="NCBIfam" id="TIGR00063">
    <property type="entry name" value="folE"/>
    <property type="match status" value="1"/>
</dbReference>
<dbReference type="NCBIfam" id="NF006825">
    <property type="entry name" value="PRK09347.1-2"/>
    <property type="match status" value="1"/>
</dbReference>
<dbReference type="NCBIfam" id="NF006826">
    <property type="entry name" value="PRK09347.1-3"/>
    <property type="match status" value="1"/>
</dbReference>
<dbReference type="PANTHER" id="PTHR11109:SF7">
    <property type="entry name" value="GTP CYCLOHYDROLASE 1"/>
    <property type="match status" value="1"/>
</dbReference>
<dbReference type="PANTHER" id="PTHR11109">
    <property type="entry name" value="GTP CYCLOHYDROLASE I"/>
    <property type="match status" value="1"/>
</dbReference>
<dbReference type="Pfam" id="PF01227">
    <property type="entry name" value="GTP_cyclohydroI"/>
    <property type="match status" value="1"/>
</dbReference>
<dbReference type="SUPFAM" id="SSF55620">
    <property type="entry name" value="Tetrahydrobiopterin biosynthesis enzymes-like"/>
    <property type="match status" value="1"/>
</dbReference>
<dbReference type="PROSITE" id="PS00859">
    <property type="entry name" value="GTP_CYCLOHYDROL_1_1"/>
    <property type="match status" value="1"/>
</dbReference>
<dbReference type="PROSITE" id="PS00860">
    <property type="entry name" value="GTP_CYCLOHYDROL_1_2"/>
    <property type="match status" value="1"/>
</dbReference>
<accession>C1CPG4</accession>
<gene>
    <name evidence="1" type="primary">folE</name>
    <name type="ordered locus">SPT_0337</name>
</gene>
<keyword id="KW-0342">GTP-binding</keyword>
<keyword id="KW-0378">Hydrolase</keyword>
<keyword id="KW-0479">Metal-binding</keyword>
<keyword id="KW-0547">Nucleotide-binding</keyword>
<keyword id="KW-0554">One-carbon metabolism</keyword>
<keyword id="KW-0862">Zinc</keyword>
<proteinExistence type="inferred from homology"/>
<protein>
    <recommendedName>
        <fullName evidence="1">GTP cyclohydrolase 1</fullName>
        <ecNumber evidence="1">3.5.4.16</ecNumber>
    </recommendedName>
    <alternativeName>
        <fullName evidence="1">GTP cyclohydrolase I</fullName>
        <shortName evidence="1">GTP-CH-I</shortName>
    </alternativeName>
</protein>
<organism>
    <name type="scientific">Streptococcus pneumoniae (strain Taiwan19F-14)</name>
    <dbReference type="NCBI Taxonomy" id="487213"/>
    <lineage>
        <taxon>Bacteria</taxon>
        <taxon>Bacillati</taxon>
        <taxon>Bacillota</taxon>
        <taxon>Bacilli</taxon>
        <taxon>Lactobacillales</taxon>
        <taxon>Streptococcaceae</taxon>
        <taxon>Streptococcus</taxon>
    </lineage>
</organism>
<sequence length="184" mass="20741">MDTQKIEAAVKMIIEAVGENVNREGLQETPARVARMYQEIFSGLGQTAEEHLSKSFEIIDDNMVVEKDIFFHTMCEHHFLPFYGRAHIAYIPDGRVAGLSKLARTVEVYSKKPQIQERLNIEVADALMDYLGAKGAFVVIEAEHMCMSMRGVRKPGTATLTTVARGLFETDKDLRDQAYRLMGL</sequence>